<feature type="initiator methionine" description="Removed" evidence="1">
    <location>
        <position position="1"/>
    </location>
</feature>
<feature type="chain" id="PRO_0000324759" description="Asparagine synthetase domain-containing protein 1">
    <location>
        <begin position="2"/>
        <end position="640"/>
    </location>
</feature>
<feature type="domain" description="Glutamine amidotransferase type-2" evidence="2">
    <location>
        <begin position="2"/>
        <end position="184"/>
    </location>
</feature>
<feature type="domain" description="Asparagine synthetase">
    <location>
        <begin position="286"/>
        <end position="602"/>
    </location>
</feature>
<feature type="active site" description="For GATase activity" evidence="1">
    <location>
        <position position="2"/>
    </location>
</feature>
<feature type="sequence conflict" description="In Ref. 2; AAI03383." evidence="3" ref="2">
    <original>Y</original>
    <variation>C</variation>
    <location>
        <position position="237"/>
    </location>
</feature>
<reference key="1">
    <citation type="journal article" date="2005" name="BMC Genomics">
        <title>Characterization of 954 bovine full-CDS cDNA sequences.</title>
        <authorList>
            <person name="Harhay G.P."/>
            <person name="Sonstegard T.S."/>
            <person name="Keele J.W."/>
            <person name="Heaton M.P."/>
            <person name="Clawson M.L."/>
            <person name="Snelling W.M."/>
            <person name="Wiedmann R.T."/>
            <person name="Van Tassell C.P."/>
            <person name="Smith T.P.L."/>
        </authorList>
    </citation>
    <scope>NUCLEOTIDE SEQUENCE [LARGE SCALE MRNA]</scope>
</reference>
<reference key="2">
    <citation type="submission" date="2005-08" db="EMBL/GenBank/DDBJ databases">
        <authorList>
            <consortium name="NIH - Mammalian Gene Collection (MGC) project"/>
        </authorList>
    </citation>
    <scope>NUCLEOTIDE SEQUENCE [LARGE SCALE MRNA]</scope>
    <source>
        <strain>Crossbred X Angus</strain>
        <tissue>Ileum</tissue>
    </source>
</reference>
<evidence type="ECO:0000250" key="1"/>
<evidence type="ECO:0000255" key="2">
    <source>
        <dbReference type="PROSITE-ProRule" id="PRU00609"/>
    </source>
</evidence>
<evidence type="ECO:0000305" key="3"/>
<accession>Q0V8E4</accession>
<accession>Q3SYU4</accession>
<keyword id="KW-0028">Amino-acid biosynthesis</keyword>
<keyword id="KW-0061">Asparagine biosynthesis</keyword>
<keyword id="KW-0315">Glutamine amidotransferase</keyword>
<keyword id="KW-1185">Reference proteome</keyword>
<dbReference type="EMBL" id="BT026275">
    <property type="protein sequence ID" value="ABG81431.1"/>
    <property type="molecule type" value="mRNA"/>
</dbReference>
<dbReference type="EMBL" id="BC103382">
    <property type="protein sequence ID" value="AAI03383.1"/>
    <property type="molecule type" value="mRNA"/>
</dbReference>
<dbReference type="RefSeq" id="NP_001029852.1">
    <property type="nucleotide sequence ID" value="NM_001034680.2"/>
</dbReference>
<dbReference type="SMR" id="Q0V8E4"/>
<dbReference type="FunCoup" id="Q0V8E4">
    <property type="interactions" value="1761"/>
</dbReference>
<dbReference type="STRING" id="9913.ENSBTAP00000052455"/>
<dbReference type="PaxDb" id="9913-ENSBTAP00000052455"/>
<dbReference type="GeneID" id="539672"/>
<dbReference type="KEGG" id="bta:539672"/>
<dbReference type="CTD" id="54529"/>
<dbReference type="eggNOG" id="KOG0573">
    <property type="taxonomic scope" value="Eukaryota"/>
</dbReference>
<dbReference type="InParanoid" id="Q0V8E4"/>
<dbReference type="OrthoDB" id="10252281at2759"/>
<dbReference type="Proteomes" id="UP000009136">
    <property type="component" value="Unplaced"/>
</dbReference>
<dbReference type="GO" id="GO:0004066">
    <property type="term" value="F:asparagine synthase (glutamine-hydrolyzing) activity"/>
    <property type="evidence" value="ECO:0007669"/>
    <property type="project" value="InterPro"/>
</dbReference>
<dbReference type="GO" id="GO:0006529">
    <property type="term" value="P:asparagine biosynthetic process"/>
    <property type="evidence" value="ECO:0007669"/>
    <property type="project" value="UniProtKB-KW"/>
</dbReference>
<dbReference type="CDD" id="cd01991">
    <property type="entry name" value="Asn_synthase_B_C"/>
    <property type="match status" value="1"/>
</dbReference>
<dbReference type="CDD" id="cd03766">
    <property type="entry name" value="Gn_AT_II_novel"/>
    <property type="match status" value="1"/>
</dbReference>
<dbReference type="Gene3D" id="3.60.20.10">
    <property type="entry name" value="Glutamine Phosphoribosylpyrophosphate, subunit 1, domain 1"/>
    <property type="match status" value="1"/>
</dbReference>
<dbReference type="Gene3D" id="3.40.50.620">
    <property type="entry name" value="HUPs"/>
    <property type="match status" value="1"/>
</dbReference>
<dbReference type="InterPro" id="IPR001962">
    <property type="entry name" value="Asn_synthase"/>
</dbReference>
<dbReference type="InterPro" id="IPR051857">
    <property type="entry name" value="Asn_synthetase_domain"/>
</dbReference>
<dbReference type="InterPro" id="IPR017932">
    <property type="entry name" value="GATase_2_dom"/>
</dbReference>
<dbReference type="InterPro" id="IPR029055">
    <property type="entry name" value="Ntn_hydrolases_N"/>
</dbReference>
<dbReference type="InterPro" id="IPR014729">
    <property type="entry name" value="Rossmann-like_a/b/a_fold"/>
</dbReference>
<dbReference type="PANTHER" id="PTHR45937">
    <property type="entry name" value="ASPARAGINE SYNTHETASE DOMAIN-CONTAINING PROTEIN 1"/>
    <property type="match status" value="1"/>
</dbReference>
<dbReference type="PANTHER" id="PTHR45937:SF1">
    <property type="entry name" value="ASPARAGINE SYNTHETASE DOMAIN-CONTAINING PROTEIN 1"/>
    <property type="match status" value="1"/>
</dbReference>
<dbReference type="Pfam" id="PF00733">
    <property type="entry name" value="Asn_synthase"/>
    <property type="match status" value="1"/>
</dbReference>
<dbReference type="Pfam" id="PF13537">
    <property type="entry name" value="GATase_7"/>
    <property type="match status" value="1"/>
</dbReference>
<dbReference type="SUPFAM" id="SSF52402">
    <property type="entry name" value="Adenine nucleotide alpha hydrolases-like"/>
    <property type="match status" value="2"/>
</dbReference>
<dbReference type="SUPFAM" id="SSF56235">
    <property type="entry name" value="N-terminal nucleophile aminohydrolases (Ntn hydrolases)"/>
    <property type="match status" value="1"/>
</dbReference>
<dbReference type="PROSITE" id="PS51278">
    <property type="entry name" value="GATASE_TYPE_2"/>
    <property type="match status" value="1"/>
</dbReference>
<sequence>MCGICCAVSFSVEHFSRDLKEDLLCNLKRRGPDSSKQLLRSTVNYQCLFSGHVLHLRGLLTAQPVEDERGNVFLWNGEIFSGIKVEAEENDTQIMFHYLSSCKNESDILSLFSKVQGPWSFIYYQASSHSLWFGRDFFGRRSLLWHFSNLGKSFCLSSVGTQASGVTDQWQEVPASGIFRIDLKSASISQSVVLKLYPWKYSSGGDDIRECVHNSLTEISADLPTFVLVAANEAKLYLKDPVVPLNMALPQAAFETHCSSISRSPLTRETLRVFLTDGHTKEVVQQFIGVLSTAVKRRVLCLPRDENLAPSEVLKTSNRKANVAVLFSGGIDSMVIAALADHHIPLDEPIDLLNVAFMTKEKTIPVNFNKKGRKQANHCEMPSEEFSKHAAATAAASPGEQLSVPDRVTGRAGLKELQAANPSRIWNFVEINVSLEELQRLRRTRISHLIQPLDTVLDDSIGCAVWFASRGAGWLVTQDGAQPYQSSAKVVLTGIGADEQLAGYSRHQVRFLAHGLEGLNKEIEMELGRISSRNLGRDDRVISDHGKEARFPFLDENVVSFLNSLPVWEKANLTLPRGIGEKLILRLAAVELGLTASALLPKRAMQFGSRIAKMEKNNEKASDKCGRLQIISLENLSVEN</sequence>
<organism>
    <name type="scientific">Bos taurus</name>
    <name type="common">Bovine</name>
    <dbReference type="NCBI Taxonomy" id="9913"/>
    <lineage>
        <taxon>Eukaryota</taxon>
        <taxon>Metazoa</taxon>
        <taxon>Chordata</taxon>
        <taxon>Craniata</taxon>
        <taxon>Vertebrata</taxon>
        <taxon>Euteleostomi</taxon>
        <taxon>Mammalia</taxon>
        <taxon>Eutheria</taxon>
        <taxon>Laurasiatheria</taxon>
        <taxon>Artiodactyla</taxon>
        <taxon>Ruminantia</taxon>
        <taxon>Pecora</taxon>
        <taxon>Bovidae</taxon>
        <taxon>Bovinae</taxon>
        <taxon>Bos</taxon>
    </lineage>
</organism>
<proteinExistence type="evidence at transcript level"/>
<gene>
    <name type="primary">ASNSD1</name>
</gene>
<name>ASND1_BOVIN</name>
<protein>
    <recommendedName>
        <fullName>Asparagine synthetase domain-containing protein 1</fullName>
    </recommendedName>
</protein>